<protein>
    <recommendedName>
        <fullName>UPF0091 protein RC0354</fullName>
    </recommendedName>
</protein>
<comment type="similarity">
    <text evidence="1">Belongs to the UPF0091 family.</text>
</comment>
<evidence type="ECO:0000305" key="1"/>
<reference key="1">
    <citation type="journal article" date="2001" name="Science">
        <title>Mechanisms of evolution in Rickettsia conorii and R. prowazekii.</title>
        <authorList>
            <person name="Ogata H."/>
            <person name="Audic S."/>
            <person name="Renesto-Audiffren P."/>
            <person name="Fournier P.-E."/>
            <person name="Barbe V."/>
            <person name="Samson D."/>
            <person name="Roux V."/>
            <person name="Cossart P."/>
            <person name="Weissenbach J."/>
            <person name="Claverie J.-M."/>
            <person name="Raoult D."/>
        </authorList>
    </citation>
    <scope>NUCLEOTIDE SEQUENCE [LARGE SCALE GENOMIC DNA]</scope>
    <source>
        <strain>ATCC VR-613 / Malish 7</strain>
    </source>
</reference>
<sequence>MTLYYIGILLVIIGLFAIFSGIIGFFRFPDFYTKLHAASVIESFGVPICLIGFACIAADIVNSVKLILAALLIFILNPVATHALGKASLFMKIRADSTVIARKITK</sequence>
<feature type="chain" id="PRO_0000184964" description="UPF0091 protein RC0354">
    <location>
        <begin position="1"/>
        <end position="106"/>
    </location>
</feature>
<organism>
    <name type="scientific">Rickettsia conorii (strain ATCC VR-613 / Malish 7)</name>
    <dbReference type="NCBI Taxonomy" id="272944"/>
    <lineage>
        <taxon>Bacteria</taxon>
        <taxon>Pseudomonadati</taxon>
        <taxon>Pseudomonadota</taxon>
        <taxon>Alphaproteobacteria</taxon>
        <taxon>Rickettsiales</taxon>
        <taxon>Rickettsiaceae</taxon>
        <taxon>Rickettsieae</taxon>
        <taxon>Rickettsia</taxon>
        <taxon>spotted fever group</taxon>
    </lineage>
</organism>
<name>Y354_RICCN</name>
<proteinExistence type="inferred from homology"/>
<gene>
    <name type="ordered locus">RC0354</name>
</gene>
<dbReference type="EMBL" id="AE006914">
    <property type="protein sequence ID" value="AAL02892.1"/>
    <property type="molecule type" value="Genomic_DNA"/>
</dbReference>
<dbReference type="PIR" id="B97744">
    <property type="entry name" value="B97744"/>
</dbReference>
<dbReference type="RefSeq" id="WP_010977009.1">
    <property type="nucleotide sequence ID" value="NC_003103.1"/>
</dbReference>
<dbReference type="SMR" id="Q92IR6"/>
<dbReference type="GeneID" id="927515"/>
<dbReference type="KEGG" id="rco:RC0354"/>
<dbReference type="PATRIC" id="fig|272944.4.peg.403"/>
<dbReference type="HOGENOM" id="CLU_121334_2_2_5"/>
<dbReference type="Proteomes" id="UP000000816">
    <property type="component" value="Chromosome"/>
</dbReference>
<dbReference type="GO" id="GO:0015385">
    <property type="term" value="F:sodium:proton antiporter activity"/>
    <property type="evidence" value="ECO:0007669"/>
    <property type="project" value="TreeGrafter"/>
</dbReference>
<dbReference type="InterPro" id="IPR005133">
    <property type="entry name" value="PhaG_MnhG_YufB"/>
</dbReference>
<dbReference type="NCBIfam" id="TIGR01300">
    <property type="entry name" value="CPA3_mnhG_phaG"/>
    <property type="match status" value="1"/>
</dbReference>
<dbReference type="NCBIfam" id="NF009317">
    <property type="entry name" value="PRK12674.2-1"/>
    <property type="match status" value="1"/>
</dbReference>
<dbReference type="PANTHER" id="PTHR34703">
    <property type="entry name" value="ANTIPORTER SUBUNIT MNHG2-RELATED"/>
    <property type="match status" value="1"/>
</dbReference>
<dbReference type="PANTHER" id="PTHR34703:SF1">
    <property type="entry name" value="ANTIPORTER SUBUNIT MNHG2-RELATED"/>
    <property type="match status" value="1"/>
</dbReference>
<dbReference type="Pfam" id="PF03334">
    <property type="entry name" value="PhaG_MnhG_YufB"/>
    <property type="match status" value="1"/>
</dbReference>
<accession>Q92IR6</accession>